<sequence length="370" mass="40394">MKFIDEARIEVIAGQGGAGSASMRREKFIEFGGPDGGDGGKGGSVWATADRNINTLIDYRYAKTHTAKNGEPGRGADCYGRAGDDIELRMPVGTIISDYETGEPIADLTTHGERLCLAQGGVGGWGNIHFKSSTNRAPRQKTNGKSGERRKLKLELKVLADVGLLGMPNAGKSTLITAVSNARPKIADYPFTTLHPNLGVVRVGSERSFVIADIPGLIEGAAEGAGLGHRFLRHLQRTGVLLHLVDIAPFDANVDPVADAAAIVNELRKYDEALVEKPRWLVLNKVDIIPEEGRKKVVSDFVKKFKWKGPVFEISALTGMGCDKLCYSLQDYLDSIRRDRDDAGERAQDPRYQDQPEDKNQIKYFTCALL</sequence>
<gene>
    <name evidence="1" type="primary">obg</name>
    <name type="ordered locus">Pnec_0214</name>
</gene>
<proteinExistence type="inferred from homology"/>
<accession>B1XT35</accession>
<feature type="chain" id="PRO_0000386127" description="GTPase Obg">
    <location>
        <begin position="1"/>
        <end position="370"/>
    </location>
</feature>
<feature type="domain" description="Obg" evidence="2">
    <location>
        <begin position="1"/>
        <end position="159"/>
    </location>
</feature>
<feature type="domain" description="OBG-type G" evidence="1">
    <location>
        <begin position="160"/>
        <end position="334"/>
    </location>
</feature>
<feature type="region of interest" description="Disordered" evidence="3">
    <location>
        <begin position="129"/>
        <end position="148"/>
    </location>
</feature>
<feature type="compositionally biased region" description="Polar residues" evidence="3">
    <location>
        <begin position="130"/>
        <end position="145"/>
    </location>
</feature>
<feature type="binding site" evidence="1">
    <location>
        <begin position="166"/>
        <end position="173"/>
    </location>
    <ligand>
        <name>GTP</name>
        <dbReference type="ChEBI" id="CHEBI:37565"/>
    </ligand>
</feature>
<feature type="binding site" evidence="1">
    <location>
        <position position="173"/>
    </location>
    <ligand>
        <name>Mg(2+)</name>
        <dbReference type="ChEBI" id="CHEBI:18420"/>
    </ligand>
</feature>
<feature type="binding site" evidence="1">
    <location>
        <begin position="191"/>
        <end position="195"/>
    </location>
    <ligand>
        <name>GTP</name>
        <dbReference type="ChEBI" id="CHEBI:37565"/>
    </ligand>
</feature>
<feature type="binding site" evidence="1">
    <location>
        <position position="193"/>
    </location>
    <ligand>
        <name>Mg(2+)</name>
        <dbReference type="ChEBI" id="CHEBI:18420"/>
    </ligand>
</feature>
<feature type="binding site" evidence="1">
    <location>
        <begin position="213"/>
        <end position="216"/>
    </location>
    <ligand>
        <name>GTP</name>
        <dbReference type="ChEBI" id="CHEBI:37565"/>
    </ligand>
</feature>
<feature type="binding site" evidence="1">
    <location>
        <begin position="284"/>
        <end position="287"/>
    </location>
    <ligand>
        <name>GTP</name>
        <dbReference type="ChEBI" id="CHEBI:37565"/>
    </ligand>
</feature>
<feature type="binding site" evidence="1">
    <location>
        <begin position="315"/>
        <end position="317"/>
    </location>
    <ligand>
        <name>GTP</name>
        <dbReference type="ChEBI" id="CHEBI:37565"/>
    </ligand>
</feature>
<name>OBG_POLNS</name>
<dbReference type="EC" id="3.6.5.-" evidence="1"/>
<dbReference type="EMBL" id="CP001010">
    <property type="protein sequence ID" value="ACB43512.1"/>
    <property type="molecule type" value="Genomic_DNA"/>
</dbReference>
<dbReference type="SMR" id="B1XT35"/>
<dbReference type="STRING" id="452638.Pnec_0214"/>
<dbReference type="KEGG" id="pne:Pnec_0214"/>
<dbReference type="eggNOG" id="COG0536">
    <property type="taxonomic scope" value="Bacteria"/>
</dbReference>
<dbReference type="HOGENOM" id="CLU_011747_2_0_4"/>
<dbReference type="OrthoDB" id="9807318at2"/>
<dbReference type="GO" id="GO:0005737">
    <property type="term" value="C:cytoplasm"/>
    <property type="evidence" value="ECO:0007669"/>
    <property type="project" value="UniProtKB-SubCell"/>
</dbReference>
<dbReference type="GO" id="GO:0005525">
    <property type="term" value="F:GTP binding"/>
    <property type="evidence" value="ECO:0007669"/>
    <property type="project" value="UniProtKB-UniRule"/>
</dbReference>
<dbReference type="GO" id="GO:0003924">
    <property type="term" value="F:GTPase activity"/>
    <property type="evidence" value="ECO:0007669"/>
    <property type="project" value="UniProtKB-UniRule"/>
</dbReference>
<dbReference type="GO" id="GO:0000287">
    <property type="term" value="F:magnesium ion binding"/>
    <property type="evidence" value="ECO:0007669"/>
    <property type="project" value="InterPro"/>
</dbReference>
<dbReference type="GO" id="GO:0042254">
    <property type="term" value="P:ribosome biogenesis"/>
    <property type="evidence" value="ECO:0007669"/>
    <property type="project" value="UniProtKB-UniRule"/>
</dbReference>
<dbReference type="CDD" id="cd01898">
    <property type="entry name" value="Obg"/>
    <property type="match status" value="1"/>
</dbReference>
<dbReference type="FunFam" id="2.70.210.12:FF:000001">
    <property type="entry name" value="GTPase Obg"/>
    <property type="match status" value="1"/>
</dbReference>
<dbReference type="Gene3D" id="2.70.210.12">
    <property type="entry name" value="GTP1/OBG domain"/>
    <property type="match status" value="1"/>
</dbReference>
<dbReference type="Gene3D" id="3.40.50.300">
    <property type="entry name" value="P-loop containing nucleotide triphosphate hydrolases"/>
    <property type="match status" value="1"/>
</dbReference>
<dbReference type="HAMAP" id="MF_01454">
    <property type="entry name" value="GTPase_Obg"/>
    <property type="match status" value="1"/>
</dbReference>
<dbReference type="InterPro" id="IPR031167">
    <property type="entry name" value="G_OBG"/>
</dbReference>
<dbReference type="InterPro" id="IPR006073">
    <property type="entry name" value="GTP-bd"/>
</dbReference>
<dbReference type="InterPro" id="IPR014100">
    <property type="entry name" value="GTP-bd_Obg/CgtA"/>
</dbReference>
<dbReference type="InterPro" id="IPR006074">
    <property type="entry name" value="GTP1-OBG_CS"/>
</dbReference>
<dbReference type="InterPro" id="IPR006169">
    <property type="entry name" value="GTP1_OBG_dom"/>
</dbReference>
<dbReference type="InterPro" id="IPR036726">
    <property type="entry name" value="GTP1_OBG_dom_sf"/>
</dbReference>
<dbReference type="InterPro" id="IPR045086">
    <property type="entry name" value="OBG_GTPase"/>
</dbReference>
<dbReference type="InterPro" id="IPR027417">
    <property type="entry name" value="P-loop_NTPase"/>
</dbReference>
<dbReference type="NCBIfam" id="TIGR02729">
    <property type="entry name" value="Obg_CgtA"/>
    <property type="match status" value="1"/>
</dbReference>
<dbReference type="NCBIfam" id="NF008954">
    <property type="entry name" value="PRK12296.1"/>
    <property type="match status" value="1"/>
</dbReference>
<dbReference type="NCBIfam" id="NF008955">
    <property type="entry name" value="PRK12297.1"/>
    <property type="match status" value="1"/>
</dbReference>
<dbReference type="NCBIfam" id="NF008956">
    <property type="entry name" value="PRK12299.1"/>
    <property type="match status" value="1"/>
</dbReference>
<dbReference type="PANTHER" id="PTHR11702">
    <property type="entry name" value="DEVELOPMENTALLY REGULATED GTP-BINDING PROTEIN-RELATED"/>
    <property type="match status" value="1"/>
</dbReference>
<dbReference type="PANTHER" id="PTHR11702:SF31">
    <property type="entry name" value="MITOCHONDRIAL RIBOSOME-ASSOCIATED GTPASE 2"/>
    <property type="match status" value="1"/>
</dbReference>
<dbReference type="Pfam" id="PF01018">
    <property type="entry name" value="GTP1_OBG"/>
    <property type="match status" value="1"/>
</dbReference>
<dbReference type="Pfam" id="PF01926">
    <property type="entry name" value="MMR_HSR1"/>
    <property type="match status" value="1"/>
</dbReference>
<dbReference type="PIRSF" id="PIRSF002401">
    <property type="entry name" value="GTP_bd_Obg/CgtA"/>
    <property type="match status" value="1"/>
</dbReference>
<dbReference type="PRINTS" id="PR00326">
    <property type="entry name" value="GTP1OBG"/>
</dbReference>
<dbReference type="SUPFAM" id="SSF82051">
    <property type="entry name" value="Obg GTP-binding protein N-terminal domain"/>
    <property type="match status" value="1"/>
</dbReference>
<dbReference type="SUPFAM" id="SSF52540">
    <property type="entry name" value="P-loop containing nucleoside triphosphate hydrolases"/>
    <property type="match status" value="1"/>
</dbReference>
<dbReference type="PROSITE" id="PS51710">
    <property type="entry name" value="G_OBG"/>
    <property type="match status" value="1"/>
</dbReference>
<dbReference type="PROSITE" id="PS00905">
    <property type="entry name" value="GTP1_OBG"/>
    <property type="match status" value="1"/>
</dbReference>
<dbReference type="PROSITE" id="PS51883">
    <property type="entry name" value="OBG"/>
    <property type="match status" value="1"/>
</dbReference>
<reference key="1">
    <citation type="journal article" date="2013" name="Proc. Natl. Acad. Sci. U.S.A.">
        <title>Polynucleobacter necessarius, a model for genome reduction in both free-living and symbiotic bacteria.</title>
        <authorList>
            <person name="Boscaro V."/>
            <person name="Felletti M."/>
            <person name="Vannini C."/>
            <person name="Ackerman M.S."/>
            <person name="Chain P.S."/>
            <person name="Malfatti S."/>
            <person name="Vergez L.M."/>
            <person name="Shin M."/>
            <person name="Doak T.G."/>
            <person name="Lynch M."/>
            <person name="Petroni G."/>
        </authorList>
    </citation>
    <scope>NUCLEOTIDE SEQUENCE [LARGE SCALE GENOMIC DNA]</scope>
    <source>
        <strain>STIR1</strain>
    </source>
</reference>
<keyword id="KW-0963">Cytoplasm</keyword>
<keyword id="KW-0342">GTP-binding</keyword>
<keyword id="KW-0378">Hydrolase</keyword>
<keyword id="KW-0460">Magnesium</keyword>
<keyword id="KW-0479">Metal-binding</keyword>
<keyword id="KW-0547">Nucleotide-binding</keyword>
<comment type="function">
    <text evidence="1">An essential GTPase which binds GTP, GDP and possibly (p)ppGpp with moderate affinity, with high nucleotide exchange rates and a fairly low GTP hydrolysis rate. Plays a role in control of the cell cycle, stress response, ribosome biogenesis and in those bacteria that undergo differentiation, in morphogenesis control.</text>
</comment>
<comment type="cofactor">
    <cofactor evidence="1">
        <name>Mg(2+)</name>
        <dbReference type="ChEBI" id="CHEBI:18420"/>
    </cofactor>
</comment>
<comment type="subunit">
    <text evidence="1">Monomer.</text>
</comment>
<comment type="subcellular location">
    <subcellularLocation>
        <location evidence="1">Cytoplasm</location>
    </subcellularLocation>
</comment>
<comment type="similarity">
    <text evidence="1">Belongs to the TRAFAC class OBG-HflX-like GTPase superfamily. OBG GTPase family.</text>
</comment>
<protein>
    <recommendedName>
        <fullName evidence="1">GTPase Obg</fullName>
        <ecNumber evidence="1">3.6.5.-</ecNumber>
    </recommendedName>
    <alternativeName>
        <fullName evidence="1">GTP-binding protein Obg</fullName>
    </alternativeName>
</protein>
<evidence type="ECO:0000255" key="1">
    <source>
        <dbReference type="HAMAP-Rule" id="MF_01454"/>
    </source>
</evidence>
<evidence type="ECO:0000255" key="2">
    <source>
        <dbReference type="PROSITE-ProRule" id="PRU01231"/>
    </source>
</evidence>
<evidence type="ECO:0000256" key="3">
    <source>
        <dbReference type="SAM" id="MobiDB-lite"/>
    </source>
</evidence>
<organism>
    <name type="scientific">Polynucleobacter necessarius subsp. necessarius (strain STIR1)</name>
    <dbReference type="NCBI Taxonomy" id="452638"/>
    <lineage>
        <taxon>Bacteria</taxon>
        <taxon>Pseudomonadati</taxon>
        <taxon>Pseudomonadota</taxon>
        <taxon>Betaproteobacteria</taxon>
        <taxon>Burkholderiales</taxon>
        <taxon>Burkholderiaceae</taxon>
        <taxon>Polynucleobacter</taxon>
    </lineage>
</organism>